<comment type="function">
    <text evidence="1">Component of the cytochrome b6-f complex, which mediates electron transfer between photosystem II (PSII) and photosystem I (PSI), cyclic electron flow around PSI, and state transitions.</text>
</comment>
<comment type="subunit">
    <text evidence="1">The 4 large subunits of the cytochrome b6-f complex are cytochrome b6, subunit IV (17 kDa polypeptide, PetD), cytochrome f and the Rieske protein, while the 4 small subunits are PetG, PetL, PetM and PetN. The complex functions as a dimer.</text>
</comment>
<comment type="subcellular location">
    <subcellularLocation>
        <location>Plastid</location>
        <location>Chloroplast thylakoid membrane</location>
        <topology>Single-pass membrane protein</topology>
    </subcellularLocation>
</comment>
<comment type="similarity">
    <text evidence="1">Belongs to the PetM family.</text>
</comment>
<organism>
    <name type="scientific">Thalassiosira pseudonana</name>
    <name type="common">Marine diatom</name>
    <name type="synonym">Cyclotella nana</name>
    <dbReference type="NCBI Taxonomy" id="35128"/>
    <lineage>
        <taxon>Eukaryota</taxon>
        <taxon>Sar</taxon>
        <taxon>Stramenopiles</taxon>
        <taxon>Ochrophyta</taxon>
        <taxon>Bacillariophyta</taxon>
        <taxon>Coscinodiscophyceae</taxon>
        <taxon>Thalassiosirophycidae</taxon>
        <taxon>Thalassiosirales</taxon>
        <taxon>Thalassiosiraceae</taxon>
        <taxon>Thalassiosira</taxon>
    </lineage>
</organism>
<name>PETM_THAPS</name>
<sequence>MALILQIFPFANAEIVTAAVTCIFMTLFGLSLGFALLKVQGE</sequence>
<accession>A0T0S6</accession>
<gene>
    <name evidence="1" type="primary">petM</name>
</gene>
<geneLocation type="chloroplast"/>
<protein>
    <recommendedName>
        <fullName evidence="1">Cytochrome b6-f complex subunit 7</fullName>
    </recommendedName>
    <alternativeName>
        <fullName evidence="1">Cytochrome b6-f complex subunit PetM</fullName>
    </alternativeName>
    <alternativeName>
        <fullName evidence="1">Cytochrome b6-f complex subunit VII</fullName>
    </alternativeName>
</protein>
<evidence type="ECO:0000255" key="1">
    <source>
        <dbReference type="HAMAP-Rule" id="MF_00396"/>
    </source>
</evidence>
<feature type="chain" id="PRO_0000275542" description="Cytochrome b6-f complex subunit 7">
    <location>
        <begin position="1"/>
        <end position="42"/>
    </location>
</feature>
<feature type="transmembrane region" description="Helical" evidence="1">
    <location>
        <begin position="19"/>
        <end position="37"/>
    </location>
</feature>
<reference key="1">
    <citation type="journal article" date="2007" name="Mol. Genet. Genomics">
        <title>Chloroplast genomes of the diatoms Phaeodactylum tricornutum and Thalassiosira pseudonana: comparison with other plastid genomes of the red lineage.</title>
        <authorList>
            <person name="Oudot-Le Secq M.-P."/>
            <person name="Grimwood J."/>
            <person name="Shapiro H."/>
            <person name="Armbrust E.V."/>
            <person name="Bowler C."/>
            <person name="Green B.R."/>
        </authorList>
    </citation>
    <scope>NUCLEOTIDE SEQUENCE [LARGE SCALE GENOMIC DNA]</scope>
    <source>
        <strain>CCMP1335 / NEPCC58 / CCAP 1085/12</strain>
    </source>
</reference>
<keyword id="KW-0150">Chloroplast</keyword>
<keyword id="KW-0249">Electron transport</keyword>
<keyword id="KW-0472">Membrane</keyword>
<keyword id="KW-0602">Photosynthesis</keyword>
<keyword id="KW-0934">Plastid</keyword>
<keyword id="KW-0793">Thylakoid</keyword>
<keyword id="KW-0812">Transmembrane</keyword>
<keyword id="KW-1133">Transmembrane helix</keyword>
<keyword id="KW-0813">Transport</keyword>
<proteinExistence type="inferred from homology"/>
<dbReference type="EMBL" id="EF067921">
    <property type="protein sequence ID" value="ABK20761.1"/>
    <property type="molecule type" value="Genomic_DNA"/>
</dbReference>
<dbReference type="RefSeq" id="YP_874538.1">
    <property type="nucleotide sequence ID" value="NC_008589.1"/>
</dbReference>
<dbReference type="SMR" id="A0T0S6"/>
<dbReference type="STRING" id="35128.A0T0S6"/>
<dbReference type="GeneID" id="4524780"/>
<dbReference type="InParanoid" id="A0T0S6"/>
<dbReference type="GO" id="GO:0009535">
    <property type="term" value="C:chloroplast thylakoid membrane"/>
    <property type="evidence" value="ECO:0007669"/>
    <property type="project" value="UniProtKB-SubCell"/>
</dbReference>
<dbReference type="GO" id="GO:0009512">
    <property type="term" value="C:cytochrome b6f complex"/>
    <property type="evidence" value="ECO:0007669"/>
    <property type="project" value="InterPro"/>
</dbReference>
<dbReference type="GO" id="GO:0009055">
    <property type="term" value="F:electron transfer activity"/>
    <property type="evidence" value="ECO:0007669"/>
    <property type="project" value="UniProtKB-UniRule"/>
</dbReference>
<dbReference type="GO" id="GO:0015979">
    <property type="term" value="P:photosynthesis"/>
    <property type="evidence" value="ECO:0007669"/>
    <property type="project" value="UniProtKB-KW"/>
</dbReference>
<dbReference type="HAMAP" id="MF_00396">
    <property type="entry name" value="Cytb6_f_PetM"/>
    <property type="match status" value="1"/>
</dbReference>
<dbReference type="InterPro" id="IPR012595">
    <property type="entry name" value="PetM_cyt_b6/f_cplx_su7"/>
</dbReference>
<dbReference type="Pfam" id="PF08041">
    <property type="entry name" value="PetM"/>
    <property type="match status" value="1"/>
</dbReference>
<dbReference type="SUPFAM" id="SSF103441">
    <property type="entry name" value="PetM subunit of the cytochrome b6f complex"/>
    <property type="match status" value="1"/>
</dbReference>